<dbReference type="EC" id="5.1.1.3" evidence="1"/>
<dbReference type="EMBL" id="AE017282">
    <property type="protein sequence ID" value="AAU92418.1"/>
    <property type="molecule type" value="Genomic_DNA"/>
</dbReference>
<dbReference type="RefSeq" id="WP_010960558.1">
    <property type="nucleotide sequence ID" value="NC_002977.6"/>
</dbReference>
<dbReference type="SMR" id="Q609F9"/>
<dbReference type="STRING" id="243233.MCA1276"/>
<dbReference type="GeneID" id="88223560"/>
<dbReference type="KEGG" id="mca:MCA1276"/>
<dbReference type="eggNOG" id="COG0796">
    <property type="taxonomic scope" value="Bacteria"/>
</dbReference>
<dbReference type="HOGENOM" id="CLU_052344_1_0_6"/>
<dbReference type="UniPathway" id="UPA00219"/>
<dbReference type="Proteomes" id="UP000006821">
    <property type="component" value="Chromosome"/>
</dbReference>
<dbReference type="GO" id="GO:0008881">
    <property type="term" value="F:glutamate racemase activity"/>
    <property type="evidence" value="ECO:0007669"/>
    <property type="project" value="UniProtKB-UniRule"/>
</dbReference>
<dbReference type="GO" id="GO:0071555">
    <property type="term" value="P:cell wall organization"/>
    <property type="evidence" value="ECO:0007669"/>
    <property type="project" value="UniProtKB-KW"/>
</dbReference>
<dbReference type="GO" id="GO:0009252">
    <property type="term" value="P:peptidoglycan biosynthetic process"/>
    <property type="evidence" value="ECO:0007669"/>
    <property type="project" value="UniProtKB-UniRule"/>
</dbReference>
<dbReference type="GO" id="GO:0008360">
    <property type="term" value="P:regulation of cell shape"/>
    <property type="evidence" value="ECO:0007669"/>
    <property type="project" value="UniProtKB-KW"/>
</dbReference>
<dbReference type="FunFam" id="3.40.50.1860:FF:000001">
    <property type="entry name" value="Glutamate racemase"/>
    <property type="match status" value="1"/>
</dbReference>
<dbReference type="Gene3D" id="3.40.50.1860">
    <property type="match status" value="2"/>
</dbReference>
<dbReference type="HAMAP" id="MF_00258">
    <property type="entry name" value="Glu_racemase"/>
    <property type="match status" value="1"/>
</dbReference>
<dbReference type="InterPro" id="IPR015942">
    <property type="entry name" value="Asp/Glu/hydantoin_racemase"/>
</dbReference>
<dbReference type="InterPro" id="IPR001920">
    <property type="entry name" value="Asp/Glu_race"/>
</dbReference>
<dbReference type="InterPro" id="IPR018187">
    <property type="entry name" value="Asp/Glu_racemase_AS_1"/>
</dbReference>
<dbReference type="InterPro" id="IPR033134">
    <property type="entry name" value="Asp/Glu_racemase_AS_2"/>
</dbReference>
<dbReference type="InterPro" id="IPR004391">
    <property type="entry name" value="Glu_race"/>
</dbReference>
<dbReference type="NCBIfam" id="TIGR00067">
    <property type="entry name" value="glut_race"/>
    <property type="match status" value="1"/>
</dbReference>
<dbReference type="PANTHER" id="PTHR21198">
    <property type="entry name" value="GLUTAMATE RACEMASE"/>
    <property type="match status" value="1"/>
</dbReference>
<dbReference type="PANTHER" id="PTHR21198:SF2">
    <property type="entry name" value="GLUTAMATE RACEMASE"/>
    <property type="match status" value="1"/>
</dbReference>
<dbReference type="Pfam" id="PF01177">
    <property type="entry name" value="Asp_Glu_race"/>
    <property type="match status" value="1"/>
</dbReference>
<dbReference type="SUPFAM" id="SSF53681">
    <property type="entry name" value="Aspartate/glutamate racemase"/>
    <property type="match status" value="2"/>
</dbReference>
<dbReference type="PROSITE" id="PS00923">
    <property type="entry name" value="ASP_GLU_RACEMASE_1"/>
    <property type="match status" value="1"/>
</dbReference>
<dbReference type="PROSITE" id="PS00924">
    <property type="entry name" value="ASP_GLU_RACEMASE_2"/>
    <property type="match status" value="1"/>
</dbReference>
<sequence>MTGNEHPIGVFDSGVGGLSVLREIRAVLPHENLLYVADSGHLPYGNKPAEYIEQRALTVGRFLLSRGAKAIVVACNTATAAAITVMRAEFRVPVIGMEPGLKPAVALSKSLVVGVLATEGTLKSAKFRDLVGRTTEKVEVIAQACPGWVEQVERGDLGSPATRDLVRRYTEPALERGADTLVLGCTHYPFLAGLIADVAGPDVHIVETGSAVARHLRRRLEADGLLTRRMAPGVELFWSSGPAEVAGRSLAVLWPGVHRVRPLPAGFAAGD</sequence>
<proteinExistence type="inferred from homology"/>
<gene>
    <name evidence="1" type="primary">murI</name>
    <name type="ordered locus">MCA1276</name>
</gene>
<keyword id="KW-0133">Cell shape</keyword>
<keyword id="KW-0961">Cell wall biogenesis/degradation</keyword>
<keyword id="KW-0413">Isomerase</keyword>
<keyword id="KW-0573">Peptidoglycan synthesis</keyword>
<keyword id="KW-1185">Reference proteome</keyword>
<name>MURI_METCA</name>
<organism>
    <name type="scientific">Methylococcus capsulatus (strain ATCC 33009 / NCIMB 11132 / Bath)</name>
    <dbReference type="NCBI Taxonomy" id="243233"/>
    <lineage>
        <taxon>Bacteria</taxon>
        <taxon>Pseudomonadati</taxon>
        <taxon>Pseudomonadota</taxon>
        <taxon>Gammaproteobacteria</taxon>
        <taxon>Methylococcales</taxon>
        <taxon>Methylococcaceae</taxon>
        <taxon>Methylococcus</taxon>
    </lineage>
</organism>
<reference key="1">
    <citation type="journal article" date="2004" name="PLoS Biol.">
        <title>Genomic insights into methanotrophy: the complete genome sequence of Methylococcus capsulatus (Bath).</title>
        <authorList>
            <person name="Ward N.L."/>
            <person name="Larsen O."/>
            <person name="Sakwa J."/>
            <person name="Bruseth L."/>
            <person name="Khouri H.M."/>
            <person name="Durkin A.S."/>
            <person name="Dimitrov G."/>
            <person name="Jiang L."/>
            <person name="Scanlan D."/>
            <person name="Kang K.H."/>
            <person name="Lewis M.R."/>
            <person name="Nelson K.E."/>
            <person name="Methe B.A."/>
            <person name="Wu M."/>
            <person name="Heidelberg J.F."/>
            <person name="Paulsen I.T."/>
            <person name="Fouts D.E."/>
            <person name="Ravel J."/>
            <person name="Tettelin H."/>
            <person name="Ren Q."/>
            <person name="Read T.D."/>
            <person name="DeBoy R.T."/>
            <person name="Seshadri R."/>
            <person name="Salzberg S.L."/>
            <person name="Jensen H.B."/>
            <person name="Birkeland N.K."/>
            <person name="Nelson W.C."/>
            <person name="Dodson R.J."/>
            <person name="Grindhaug S.H."/>
            <person name="Holt I.E."/>
            <person name="Eidhammer I."/>
            <person name="Jonasen I."/>
            <person name="Vanaken S."/>
            <person name="Utterback T.R."/>
            <person name="Feldblyum T.V."/>
            <person name="Fraser C.M."/>
            <person name="Lillehaug J.R."/>
            <person name="Eisen J.A."/>
        </authorList>
    </citation>
    <scope>NUCLEOTIDE SEQUENCE [LARGE SCALE GENOMIC DNA]</scope>
    <source>
        <strain>ATCC 33009 / NCIMB 11132 / Bath</strain>
    </source>
</reference>
<evidence type="ECO:0000255" key="1">
    <source>
        <dbReference type="HAMAP-Rule" id="MF_00258"/>
    </source>
</evidence>
<accession>Q609F9</accession>
<comment type="function">
    <text evidence="1">Provides the (R)-glutamate required for cell wall biosynthesis.</text>
</comment>
<comment type="catalytic activity">
    <reaction evidence="1">
        <text>L-glutamate = D-glutamate</text>
        <dbReference type="Rhea" id="RHEA:12813"/>
        <dbReference type="ChEBI" id="CHEBI:29985"/>
        <dbReference type="ChEBI" id="CHEBI:29986"/>
        <dbReference type="EC" id="5.1.1.3"/>
    </reaction>
</comment>
<comment type="pathway">
    <text evidence="1">Cell wall biogenesis; peptidoglycan biosynthesis.</text>
</comment>
<comment type="similarity">
    <text evidence="1">Belongs to the aspartate/glutamate racemases family.</text>
</comment>
<feature type="chain" id="PRO_1000059070" description="Glutamate racemase">
    <location>
        <begin position="1"/>
        <end position="271"/>
    </location>
</feature>
<feature type="active site" description="Proton donor/acceptor" evidence="1">
    <location>
        <position position="75"/>
    </location>
</feature>
<feature type="active site" description="Proton donor/acceptor" evidence="1">
    <location>
        <position position="185"/>
    </location>
</feature>
<feature type="binding site" evidence="1">
    <location>
        <begin position="12"/>
        <end position="13"/>
    </location>
    <ligand>
        <name>substrate</name>
    </ligand>
</feature>
<feature type="binding site" evidence="1">
    <location>
        <begin position="44"/>
        <end position="45"/>
    </location>
    <ligand>
        <name>substrate</name>
    </ligand>
</feature>
<feature type="binding site" evidence="1">
    <location>
        <begin position="76"/>
        <end position="77"/>
    </location>
    <ligand>
        <name>substrate</name>
    </ligand>
</feature>
<feature type="binding site" evidence="1">
    <location>
        <begin position="186"/>
        <end position="187"/>
    </location>
    <ligand>
        <name>substrate</name>
    </ligand>
</feature>
<protein>
    <recommendedName>
        <fullName evidence="1">Glutamate racemase</fullName>
        <ecNumber evidence="1">5.1.1.3</ecNumber>
    </recommendedName>
</protein>